<comment type="function">
    <text evidence="1">The RecF protein is involved in DNA metabolism; it is required for DNA replication and normal SOS inducibility. RecF binds preferentially to single-stranded, linear DNA. It also seems to bind ATP.</text>
</comment>
<comment type="subcellular location">
    <subcellularLocation>
        <location evidence="1">Cytoplasm</location>
    </subcellularLocation>
</comment>
<comment type="similarity">
    <text evidence="1">Belongs to the RecF family.</text>
</comment>
<gene>
    <name evidence="1" type="primary">recF</name>
    <name type="ordered locus">Blon_0004</name>
    <name type="ordered locus">BLIJ_0004</name>
</gene>
<keyword id="KW-0067">ATP-binding</keyword>
<keyword id="KW-0963">Cytoplasm</keyword>
<keyword id="KW-0227">DNA damage</keyword>
<keyword id="KW-0234">DNA repair</keyword>
<keyword id="KW-0235">DNA replication</keyword>
<keyword id="KW-0238">DNA-binding</keyword>
<keyword id="KW-0547">Nucleotide-binding</keyword>
<keyword id="KW-0742">SOS response</keyword>
<organism>
    <name type="scientific">Bifidobacterium longum subsp. infantis (strain ATCC 15697 / DSM 20088 / JCM 1222 / NCTC 11817 / S12)</name>
    <dbReference type="NCBI Taxonomy" id="391904"/>
    <lineage>
        <taxon>Bacteria</taxon>
        <taxon>Bacillati</taxon>
        <taxon>Actinomycetota</taxon>
        <taxon>Actinomycetes</taxon>
        <taxon>Bifidobacteriales</taxon>
        <taxon>Bifidobacteriaceae</taxon>
        <taxon>Bifidobacterium</taxon>
    </lineage>
</organism>
<dbReference type="EMBL" id="CP001095">
    <property type="protein sequence ID" value="ACJ51140.1"/>
    <property type="molecule type" value="Genomic_DNA"/>
</dbReference>
<dbReference type="EMBL" id="AP010889">
    <property type="protein sequence ID" value="BAJ67599.1"/>
    <property type="molecule type" value="Genomic_DNA"/>
</dbReference>
<dbReference type="RefSeq" id="WP_012576464.1">
    <property type="nucleotide sequence ID" value="NC_011593.1"/>
</dbReference>
<dbReference type="SMR" id="B7GSG2"/>
<dbReference type="KEGG" id="bln:Blon_0004"/>
<dbReference type="KEGG" id="blon:BLIJ_0004"/>
<dbReference type="PATRIC" id="fig|391904.8.peg.3"/>
<dbReference type="HOGENOM" id="CLU_040267_1_1_11"/>
<dbReference type="Proteomes" id="UP000001360">
    <property type="component" value="Chromosome"/>
</dbReference>
<dbReference type="GO" id="GO:0005737">
    <property type="term" value="C:cytoplasm"/>
    <property type="evidence" value="ECO:0007669"/>
    <property type="project" value="UniProtKB-SubCell"/>
</dbReference>
<dbReference type="GO" id="GO:0005524">
    <property type="term" value="F:ATP binding"/>
    <property type="evidence" value="ECO:0007669"/>
    <property type="project" value="UniProtKB-UniRule"/>
</dbReference>
<dbReference type="GO" id="GO:0003697">
    <property type="term" value="F:single-stranded DNA binding"/>
    <property type="evidence" value="ECO:0007669"/>
    <property type="project" value="UniProtKB-UniRule"/>
</dbReference>
<dbReference type="GO" id="GO:0006260">
    <property type="term" value="P:DNA replication"/>
    <property type="evidence" value="ECO:0007669"/>
    <property type="project" value="UniProtKB-UniRule"/>
</dbReference>
<dbReference type="GO" id="GO:0000731">
    <property type="term" value="P:DNA synthesis involved in DNA repair"/>
    <property type="evidence" value="ECO:0007669"/>
    <property type="project" value="TreeGrafter"/>
</dbReference>
<dbReference type="GO" id="GO:0006302">
    <property type="term" value="P:double-strand break repair"/>
    <property type="evidence" value="ECO:0007669"/>
    <property type="project" value="TreeGrafter"/>
</dbReference>
<dbReference type="GO" id="GO:0009432">
    <property type="term" value="P:SOS response"/>
    <property type="evidence" value="ECO:0007669"/>
    <property type="project" value="UniProtKB-UniRule"/>
</dbReference>
<dbReference type="Gene3D" id="3.40.50.300">
    <property type="entry name" value="P-loop containing nucleotide triphosphate hydrolases"/>
    <property type="match status" value="1"/>
</dbReference>
<dbReference type="Gene3D" id="1.20.1050.90">
    <property type="entry name" value="RecF/RecN/SMC, N-terminal domain"/>
    <property type="match status" value="1"/>
</dbReference>
<dbReference type="HAMAP" id="MF_00365">
    <property type="entry name" value="RecF"/>
    <property type="match status" value="1"/>
</dbReference>
<dbReference type="InterPro" id="IPR001238">
    <property type="entry name" value="DNA-binding_RecF"/>
</dbReference>
<dbReference type="InterPro" id="IPR027417">
    <property type="entry name" value="P-loop_NTPase"/>
</dbReference>
<dbReference type="InterPro" id="IPR003395">
    <property type="entry name" value="RecF/RecN/SMC_N"/>
</dbReference>
<dbReference type="InterPro" id="IPR042174">
    <property type="entry name" value="RecF_2"/>
</dbReference>
<dbReference type="NCBIfam" id="TIGR00611">
    <property type="entry name" value="recf"/>
    <property type="match status" value="1"/>
</dbReference>
<dbReference type="PANTHER" id="PTHR32182">
    <property type="entry name" value="DNA REPLICATION AND REPAIR PROTEIN RECF"/>
    <property type="match status" value="1"/>
</dbReference>
<dbReference type="PANTHER" id="PTHR32182:SF0">
    <property type="entry name" value="DNA REPLICATION AND REPAIR PROTEIN RECF"/>
    <property type="match status" value="1"/>
</dbReference>
<dbReference type="Pfam" id="PF02463">
    <property type="entry name" value="SMC_N"/>
    <property type="match status" value="1"/>
</dbReference>
<dbReference type="SUPFAM" id="SSF52540">
    <property type="entry name" value="P-loop containing nucleoside triphosphate hydrolases"/>
    <property type="match status" value="1"/>
</dbReference>
<accession>B7GSG2</accession>
<accession>E8MML1</accession>
<feature type="chain" id="PRO_1000133676" description="DNA replication and repair protein RecF">
    <location>
        <begin position="1"/>
        <end position="412"/>
    </location>
</feature>
<feature type="binding site" evidence="1">
    <location>
        <begin position="30"/>
        <end position="37"/>
    </location>
    <ligand>
        <name>ATP</name>
        <dbReference type="ChEBI" id="CHEBI:30616"/>
    </ligand>
</feature>
<sequence length="412" mass="44908">MHISRLALDHYRSWSQVVVDFVPGVNILFGKNGLGKTNLVEAVEVLSTGSSHRTSSTLPLIERGQTTATIRANVADDAGQTTTYEASIHARGANRARINSGSSLYLRDIIGKIPSVSFTPEDQRLVSGDPGARRTMMNQAAALLEPGYMQTLQQFTRIAKQRATLLKQLNANANNGQPMDAVLSGLEIWTGQFIEAGVVLTRMRAHVISLLAEPFAAIYADLAGAGEQVTLTYAPSFDEVLMFNDPHPQISEHFQRIYPGEVARGVNLIGPQRDDMNLDLAGIPAREFASNGEMWTMALALKMALFEIVRDRLGLQPIVILDDVFAQLDDSRRAQILDFARKQDQVLITVAAEGDVPDYESAHRIDVAALAEPASVILPTLGNLSDLRENESLGKYDGKTAVDSASVERKVS</sequence>
<proteinExistence type="inferred from homology"/>
<protein>
    <recommendedName>
        <fullName evidence="1">DNA replication and repair protein RecF</fullName>
    </recommendedName>
</protein>
<name>RECF_BIFLS</name>
<reference key="1">
    <citation type="journal article" date="2008" name="Proc. Natl. Acad. Sci. U.S.A.">
        <title>The genome sequence of Bifidobacterium longum subsp. infantis reveals adaptations for milk utilization within the infant microbiome.</title>
        <authorList>
            <person name="Sela D.A."/>
            <person name="Chapman J."/>
            <person name="Adeuya A."/>
            <person name="Kim J.H."/>
            <person name="Chen F."/>
            <person name="Whitehead T.R."/>
            <person name="Lapidus A."/>
            <person name="Rokhsar D.S."/>
            <person name="Lebrilla C.B."/>
            <person name="German J.B."/>
            <person name="Price N.P."/>
            <person name="Richardson P.M."/>
            <person name="Mills D.A."/>
        </authorList>
    </citation>
    <scope>NUCLEOTIDE SEQUENCE [LARGE SCALE GENOMIC DNA]</scope>
    <source>
        <strain>ATCC 15697 / DSM 20088 / JCM 1222 / NCTC 11817 / S12</strain>
    </source>
</reference>
<reference key="2">
    <citation type="journal article" date="2011" name="Nature">
        <title>Bifidobacteria can protect from enteropathogenic infection through production of acetate.</title>
        <authorList>
            <person name="Fukuda S."/>
            <person name="Toh H."/>
            <person name="Hase K."/>
            <person name="Oshima K."/>
            <person name="Nakanishi Y."/>
            <person name="Yoshimura K."/>
            <person name="Tobe T."/>
            <person name="Clarke J.M."/>
            <person name="Topping D.L."/>
            <person name="Suzuki T."/>
            <person name="Taylor T.D."/>
            <person name="Itoh K."/>
            <person name="Kikuchi J."/>
            <person name="Morita H."/>
            <person name="Hattori M."/>
            <person name="Ohno H."/>
        </authorList>
    </citation>
    <scope>NUCLEOTIDE SEQUENCE [LARGE SCALE GENOMIC DNA]</scope>
    <source>
        <strain>ATCC 15697 / DSM 20088 / JCM 1222 / NCTC 11817 / S12</strain>
    </source>
</reference>
<evidence type="ECO:0000255" key="1">
    <source>
        <dbReference type="HAMAP-Rule" id="MF_00365"/>
    </source>
</evidence>